<feature type="chain" id="PRO_1000000883" description="Adenylosuccinate synthetase">
    <location>
        <begin position="1"/>
        <end position="423"/>
    </location>
</feature>
<feature type="active site" description="Proton acceptor" evidence="1">
    <location>
        <position position="13"/>
    </location>
</feature>
<feature type="active site" description="Proton donor" evidence="1">
    <location>
        <position position="41"/>
    </location>
</feature>
<feature type="binding site" evidence="1">
    <location>
        <begin position="12"/>
        <end position="18"/>
    </location>
    <ligand>
        <name>GTP</name>
        <dbReference type="ChEBI" id="CHEBI:37565"/>
    </ligand>
</feature>
<feature type="binding site" description="in other chain" evidence="1">
    <location>
        <begin position="13"/>
        <end position="16"/>
    </location>
    <ligand>
        <name>IMP</name>
        <dbReference type="ChEBI" id="CHEBI:58053"/>
        <note>ligand shared between dimeric partners</note>
    </ligand>
</feature>
<feature type="binding site" evidence="1">
    <location>
        <position position="13"/>
    </location>
    <ligand>
        <name>Mg(2+)</name>
        <dbReference type="ChEBI" id="CHEBI:18420"/>
    </ligand>
</feature>
<feature type="binding site" description="in other chain" evidence="1">
    <location>
        <begin position="38"/>
        <end position="41"/>
    </location>
    <ligand>
        <name>IMP</name>
        <dbReference type="ChEBI" id="CHEBI:58053"/>
        <note>ligand shared between dimeric partners</note>
    </ligand>
</feature>
<feature type="binding site" evidence="1">
    <location>
        <begin position="40"/>
        <end position="42"/>
    </location>
    <ligand>
        <name>GTP</name>
        <dbReference type="ChEBI" id="CHEBI:37565"/>
    </ligand>
</feature>
<feature type="binding site" evidence="1">
    <location>
        <position position="40"/>
    </location>
    <ligand>
        <name>Mg(2+)</name>
        <dbReference type="ChEBI" id="CHEBI:18420"/>
    </ligand>
</feature>
<feature type="binding site" description="in other chain" evidence="1">
    <location>
        <position position="129"/>
    </location>
    <ligand>
        <name>IMP</name>
        <dbReference type="ChEBI" id="CHEBI:58053"/>
        <note>ligand shared between dimeric partners</note>
    </ligand>
</feature>
<feature type="binding site" evidence="1">
    <location>
        <position position="143"/>
    </location>
    <ligand>
        <name>IMP</name>
        <dbReference type="ChEBI" id="CHEBI:58053"/>
        <note>ligand shared between dimeric partners</note>
    </ligand>
</feature>
<feature type="binding site" description="in other chain" evidence="1">
    <location>
        <position position="221"/>
    </location>
    <ligand>
        <name>IMP</name>
        <dbReference type="ChEBI" id="CHEBI:58053"/>
        <note>ligand shared between dimeric partners</note>
    </ligand>
</feature>
<feature type="binding site" description="in other chain" evidence="1">
    <location>
        <position position="236"/>
    </location>
    <ligand>
        <name>IMP</name>
        <dbReference type="ChEBI" id="CHEBI:58053"/>
        <note>ligand shared between dimeric partners</note>
    </ligand>
</feature>
<feature type="binding site" evidence="1">
    <location>
        <begin position="296"/>
        <end position="302"/>
    </location>
    <ligand>
        <name>substrate</name>
    </ligand>
</feature>
<feature type="binding site" description="in other chain" evidence="1">
    <location>
        <position position="300"/>
    </location>
    <ligand>
        <name>IMP</name>
        <dbReference type="ChEBI" id="CHEBI:58053"/>
        <note>ligand shared between dimeric partners</note>
    </ligand>
</feature>
<feature type="binding site" evidence="1">
    <location>
        <position position="302"/>
    </location>
    <ligand>
        <name>GTP</name>
        <dbReference type="ChEBI" id="CHEBI:37565"/>
    </ligand>
</feature>
<feature type="binding site" evidence="1">
    <location>
        <begin position="328"/>
        <end position="330"/>
    </location>
    <ligand>
        <name>GTP</name>
        <dbReference type="ChEBI" id="CHEBI:37565"/>
    </ligand>
</feature>
<feature type="binding site" evidence="1">
    <location>
        <begin position="408"/>
        <end position="410"/>
    </location>
    <ligand>
        <name>GTP</name>
        <dbReference type="ChEBI" id="CHEBI:37565"/>
    </ligand>
</feature>
<dbReference type="EC" id="6.3.4.4" evidence="1"/>
<dbReference type="EMBL" id="CP000140">
    <property type="protein sequence ID" value="ABR45469.1"/>
    <property type="molecule type" value="Genomic_DNA"/>
</dbReference>
<dbReference type="RefSeq" id="WP_012056173.1">
    <property type="nucleotide sequence ID" value="NC_009615.1"/>
</dbReference>
<dbReference type="SMR" id="A6LIF5"/>
<dbReference type="STRING" id="435591.BDI_3782"/>
<dbReference type="PaxDb" id="435591-BDI_3782"/>
<dbReference type="KEGG" id="pdi:BDI_3782"/>
<dbReference type="PATRIC" id="fig|435591.13.peg.3739"/>
<dbReference type="eggNOG" id="COG0104">
    <property type="taxonomic scope" value="Bacteria"/>
</dbReference>
<dbReference type="HOGENOM" id="CLU_029848_0_0_10"/>
<dbReference type="BioCyc" id="PDIS435591:G1G5A-3879-MONOMER"/>
<dbReference type="UniPathway" id="UPA00075">
    <property type="reaction ID" value="UER00335"/>
</dbReference>
<dbReference type="Proteomes" id="UP000000566">
    <property type="component" value="Chromosome"/>
</dbReference>
<dbReference type="GO" id="GO:0005737">
    <property type="term" value="C:cytoplasm"/>
    <property type="evidence" value="ECO:0007669"/>
    <property type="project" value="UniProtKB-SubCell"/>
</dbReference>
<dbReference type="GO" id="GO:0004019">
    <property type="term" value="F:adenylosuccinate synthase activity"/>
    <property type="evidence" value="ECO:0007669"/>
    <property type="project" value="UniProtKB-UniRule"/>
</dbReference>
<dbReference type="GO" id="GO:0005525">
    <property type="term" value="F:GTP binding"/>
    <property type="evidence" value="ECO:0007669"/>
    <property type="project" value="UniProtKB-UniRule"/>
</dbReference>
<dbReference type="GO" id="GO:0000287">
    <property type="term" value="F:magnesium ion binding"/>
    <property type="evidence" value="ECO:0007669"/>
    <property type="project" value="UniProtKB-UniRule"/>
</dbReference>
<dbReference type="GO" id="GO:0044208">
    <property type="term" value="P:'de novo' AMP biosynthetic process"/>
    <property type="evidence" value="ECO:0007669"/>
    <property type="project" value="UniProtKB-UniRule"/>
</dbReference>
<dbReference type="GO" id="GO:0046040">
    <property type="term" value="P:IMP metabolic process"/>
    <property type="evidence" value="ECO:0007669"/>
    <property type="project" value="TreeGrafter"/>
</dbReference>
<dbReference type="CDD" id="cd03108">
    <property type="entry name" value="AdSS"/>
    <property type="match status" value="1"/>
</dbReference>
<dbReference type="FunFam" id="1.10.300.10:FF:000001">
    <property type="entry name" value="Adenylosuccinate synthetase"/>
    <property type="match status" value="1"/>
</dbReference>
<dbReference type="FunFam" id="3.90.170.10:FF:000001">
    <property type="entry name" value="Adenylosuccinate synthetase"/>
    <property type="match status" value="1"/>
</dbReference>
<dbReference type="Gene3D" id="3.40.440.10">
    <property type="entry name" value="Adenylosuccinate Synthetase, subunit A, domain 1"/>
    <property type="match status" value="1"/>
</dbReference>
<dbReference type="Gene3D" id="1.10.300.10">
    <property type="entry name" value="Adenylosuccinate Synthetase, subunit A, domain 2"/>
    <property type="match status" value="1"/>
</dbReference>
<dbReference type="Gene3D" id="3.90.170.10">
    <property type="entry name" value="Adenylosuccinate Synthetase, subunit A, domain 3"/>
    <property type="match status" value="1"/>
</dbReference>
<dbReference type="HAMAP" id="MF_00011">
    <property type="entry name" value="Adenylosucc_synth"/>
    <property type="match status" value="1"/>
</dbReference>
<dbReference type="InterPro" id="IPR018220">
    <property type="entry name" value="Adenylosuccin_syn_GTP-bd"/>
</dbReference>
<dbReference type="InterPro" id="IPR033128">
    <property type="entry name" value="Adenylosuccin_syn_Lys_AS"/>
</dbReference>
<dbReference type="InterPro" id="IPR042109">
    <property type="entry name" value="Adenylosuccinate_synth_dom1"/>
</dbReference>
<dbReference type="InterPro" id="IPR042110">
    <property type="entry name" value="Adenylosuccinate_synth_dom2"/>
</dbReference>
<dbReference type="InterPro" id="IPR042111">
    <property type="entry name" value="Adenylosuccinate_synth_dom3"/>
</dbReference>
<dbReference type="InterPro" id="IPR001114">
    <property type="entry name" value="Adenylosuccinate_synthetase"/>
</dbReference>
<dbReference type="InterPro" id="IPR027417">
    <property type="entry name" value="P-loop_NTPase"/>
</dbReference>
<dbReference type="NCBIfam" id="NF002223">
    <property type="entry name" value="PRK01117.1"/>
    <property type="match status" value="1"/>
</dbReference>
<dbReference type="NCBIfam" id="TIGR00184">
    <property type="entry name" value="purA"/>
    <property type="match status" value="1"/>
</dbReference>
<dbReference type="PANTHER" id="PTHR11846">
    <property type="entry name" value="ADENYLOSUCCINATE SYNTHETASE"/>
    <property type="match status" value="1"/>
</dbReference>
<dbReference type="PANTHER" id="PTHR11846:SF0">
    <property type="entry name" value="ADENYLOSUCCINATE SYNTHETASE"/>
    <property type="match status" value="1"/>
</dbReference>
<dbReference type="Pfam" id="PF00709">
    <property type="entry name" value="Adenylsucc_synt"/>
    <property type="match status" value="1"/>
</dbReference>
<dbReference type="SMART" id="SM00788">
    <property type="entry name" value="Adenylsucc_synt"/>
    <property type="match status" value="1"/>
</dbReference>
<dbReference type="SUPFAM" id="SSF52540">
    <property type="entry name" value="P-loop containing nucleoside triphosphate hydrolases"/>
    <property type="match status" value="1"/>
</dbReference>
<dbReference type="PROSITE" id="PS01266">
    <property type="entry name" value="ADENYLOSUCCIN_SYN_1"/>
    <property type="match status" value="1"/>
</dbReference>
<dbReference type="PROSITE" id="PS00513">
    <property type="entry name" value="ADENYLOSUCCIN_SYN_2"/>
    <property type="match status" value="1"/>
</dbReference>
<proteinExistence type="inferred from homology"/>
<comment type="function">
    <text evidence="1">Plays an important role in the de novo pathway of purine nucleotide biosynthesis. Catalyzes the first committed step in the biosynthesis of AMP from IMP.</text>
</comment>
<comment type="catalytic activity">
    <reaction evidence="1">
        <text>IMP + L-aspartate + GTP = N(6)-(1,2-dicarboxyethyl)-AMP + GDP + phosphate + 2 H(+)</text>
        <dbReference type="Rhea" id="RHEA:15753"/>
        <dbReference type="ChEBI" id="CHEBI:15378"/>
        <dbReference type="ChEBI" id="CHEBI:29991"/>
        <dbReference type="ChEBI" id="CHEBI:37565"/>
        <dbReference type="ChEBI" id="CHEBI:43474"/>
        <dbReference type="ChEBI" id="CHEBI:57567"/>
        <dbReference type="ChEBI" id="CHEBI:58053"/>
        <dbReference type="ChEBI" id="CHEBI:58189"/>
        <dbReference type="EC" id="6.3.4.4"/>
    </reaction>
</comment>
<comment type="cofactor">
    <cofactor evidence="1">
        <name>Mg(2+)</name>
        <dbReference type="ChEBI" id="CHEBI:18420"/>
    </cofactor>
    <text evidence="1">Binds 1 Mg(2+) ion per subunit.</text>
</comment>
<comment type="pathway">
    <text evidence="1">Purine metabolism; AMP biosynthesis via de novo pathway; AMP from IMP: step 1/2.</text>
</comment>
<comment type="subunit">
    <text evidence="1">Homodimer.</text>
</comment>
<comment type="subcellular location">
    <subcellularLocation>
        <location evidence="1">Cytoplasm</location>
    </subcellularLocation>
</comment>
<comment type="similarity">
    <text evidence="1">Belongs to the adenylosuccinate synthetase family.</text>
</comment>
<reference key="1">
    <citation type="journal article" date="2007" name="PLoS Biol.">
        <title>Evolution of symbiotic bacteria in the distal human intestine.</title>
        <authorList>
            <person name="Xu J."/>
            <person name="Mahowald M.A."/>
            <person name="Ley R.E."/>
            <person name="Lozupone C.A."/>
            <person name="Hamady M."/>
            <person name="Martens E.C."/>
            <person name="Henrissat B."/>
            <person name="Coutinho P.M."/>
            <person name="Minx P."/>
            <person name="Latreille P."/>
            <person name="Cordum H."/>
            <person name="Van Brunt A."/>
            <person name="Kim K."/>
            <person name="Fulton R.S."/>
            <person name="Fulton L.A."/>
            <person name="Clifton S.W."/>
            <person name="Wilson R.K."/>
            <person name="Knight R.D."/>
            <person name="Gordon J.I."/>
        </authorList>
    </citation>
    <scope>NUCLEOTIDE SEQUENCE [LARGE SCALE GENOMIC DNA]</scope>
    <source>
        <strain>ATCC 8503 / DSM 20701 / CIP 104284 / JCM 5825 / NCTC 11152</strain>
    </source>
</reference>
<protein>
    <recommendedName>
        <fullName evidence="1">Adenylosuccinate synthetase</fullName>
        <shortName evidence="1">AMPSase</shortName>
        <shortName evidence="1">AdSS</shortName>
        <ecNumber evidence="1">6.3.4.4</ecNumber>
    </recommendedName>
    <alternativeName>
        <fullName evidence="1">IMP--aspartate ligase</fullName>
    </alternativeName>
</protein>
<evidence type="ECO:0000255" key="1">
    <source>
        <dbReference type="HAMAP-Rule" id="MF_00011"/>
    </source>
</evidence>
<accession>A6LIF5</accession>
<keyword id="KW-0963">Cytoplasm</keyword>
<keyword id="KW-0342">GTP-binding</keyword>
<keyword id="KW-0436">Ligase</keyword>
<keyword id="KW-0460">Magnesium</keyword>
<keyword id="KW-0479">Metal-binding</keyword>
<keyword id="KW-0547">Nucleotide-binding</keyword>
<keyword id="KW-0658">Purine biosynthesis</keyword>
<keyword id="KW-1185">Reference proteome</keyword>
<gene>
    <name evidence="1" type="primary">purA</name>
    <name type="ordered locus">BDI_3782</name>
</gene>
<sequence>MKVDVLLGLQWGDEGKGKVVDVLTPNYDVVTRFQGGPNAGHTLEFNGEKYVLRSIPSGIFQGGKINVIGNGVVLDPLLFKQEAESLAASGHDITKQLYISKKAHLILPTHRILDAAYEAAKGSGKIGTTGKGIGPTYTDKISRNGVRVGDLLHNFEEKYAAAKAKHEAILRSLNYEYDITEMEAQWLEALNYLRQFKLIDSEHVINNYLKEGKSVLAEGAQGTMLDIDFGSYPFVTSSNTICAGCCTGLGVSPRNIGEVYGIFKAYCTRVGSGPFPTELFDEVGDKIGQLGHEFGAVTGRKRRCGWIDLVALRYAVMINGVSQLIMMKSDVLDTFDTIKACVAYKMNGVETNEFPYEIDDTIEPVYVELPGWKTDMTKMRSEDEFPEEFNAYLSFLEEELGVPVKIVSVGPDREQTIVRYTEE</sequence>
<name>PURA_PARD8</name>
<organism>
    <name type="scientific">Parabacteroides distasonis (strain ATCC 8503 / DSM 20701 / CIP 104284 / JCM 5825 / NCTC 11152)</name>
    <dbReference type="NCBI Taxonomy" id="435591"/>
    <lineage>
        <taxon>Bacteria</taxon>
        <taxon>Pseudomonadati</taxon>
        <taxon>Bacteroidota</taxon>
        <taxon>Bacteroidia</taxon>
        <taxon>Bacteroidales</taxon>
        <taxon>Tannerellaceae</taxon>
        <taxon>Parabacteroides</taxon>
    </lineage>
</organism>